<protein>
    <recommendedName>
        <fullName evidence="1">5-oxoprolinase subunit A</fullName>
        <shortName evidence="1">5-OPase subunit A</shortName>
        <ecNumber evidence="1">3.5.2.9</ecNumber>
    </recommendedName>
    <alternativeName>
        <fullName evidence="1">5-oxoprolinase (ATP-hydrolyzing) subunit A</fullName>
    </alternativeName>
</protein>
<proteinExistence type="inferred from homology"/>
<dbReference type="EC" id="3.5.2.9" evidence="1"/>
<dbReference type="EMBL" id="CP000721">
    <property type="protein sequence ID" value="ABR34910.1"/>
    <property type="molecule type" value="Genomic_DNA"/>
</dbReference>
<dbReference type="RefSeq" id="WP_012058965.1">
    <property type="nucleotide sequence ID" value="NC_009617.1"/>
</dbReference>
<dbReference type="SMR" id="A6LX30"/>
<dbReference type="GeneID" id="66345665"/>
<dbReference type="KEGG" id="cbe:Cbei_2759"/>
<dbReference type="eggNOG" id="COG1540">
    <property type="taxonomic scope" value="Bacteria"/>
</dbReference>
<dbReference type="HOGENOM" id="CLU_069535_0_0_9"/>
<dbReference type="Proteomes" id="UP000000565">
    <property type="component" value="Chromosome"/>
</dbReference>
<dbReference type="GO" id="GO:0017168">
    <property type="term" value="F:5-oxoprolinase (ATP-hydrolyzing) activity"/>
    <property type="evidence" value="ECO:0007669"/>
    <property type="project" value="UniProtKB-UniRule"/>
</dbReference>
<dbReference type="GO" id="GO:0005524">
    <property type="term" value="F:ATP binding"/>
    <property type="evidence" value="ECO:0007669"/>
    <property type="project" value="UniProtKB-UniRule"/>
</dbReference>
<dbReference type="GO" id="GO:0005975">
    <property type="term" value="P:carbohydrate metabolic process"/>
    <property type="evidence" value="ECO:0007669"/>
    <property type="project" value="InterPro"/>
</dbReference>
<dbReference type="CDD" id="cd10787">
    <property type="entry name" value="LamB_YcsF_like"/>
    <property type="match status" value="1"/>
</dbReference>
<dbReference type="Gene3D" id="3.20.20.370">
    <property type="entry name" value="Glycoside hydrolase/deacetylase"/>
    <property type="match status" value="1"/>
</dbReference>
<dbReference type="HAMAP" id="MF_00691">
    <property type="entry name" value="PxpA"/>
    <property type="match status" value="1"/>
</dbReference>
<dbReference type="InterPro" id="IPR011330">
    <property type="entry name" value="Glyco_hydro/deAcase_b/a-brl"/>
</dbReference>
<dbReference type="InterPro" id="IPR005501">
    <property type="entry name" value="LamB/YcsF/PxpA-like"/>
</dbReference>
<dbReference type="NCBIfam" id="NF003814">
    <property type="entry name" value="PRK05406.1-3"/>
    <property type="match status" value="1"/>
</dbReference>
<dbReference type="NCBIfam" id="NF003816">
    <property type="entry name" value="PRK05406.1-5"/>
    <property type="match status" value="1"/>
</dbReference>
<dbReference type="PANTHER" id="PTHR30292:SF0">
    <property type="entry name" value="5-OXOPROLINASE SUBUNIT A"/>
    <property type="match status" value="1"/>
</dbReference>
<dbReference type="PANTHER" id="PTHR30292">
    <property type="entry name" value="UNCHARACTERIZED PROTEIN YBGL-RELATED"/>
    <property type="match status" value="1"/>
</dbReference>
<dbReference type="Pfam" id="PF03746">
    <property type="entry name" value="LamB_YcsF"/>
    <property type="match status" value="1"/>
</dbReference>
<dbReference type="SUPFAM" id="SSF88713">
    <property type="entry name" value="Glycoside hydrolase/deacetylase"/>
    <property type="match status" value="1"/>
</dbReference>
<reference key="1">
    <citation type="submission" date="2007-06" db="EMBL/GenBank/DDBJ databases">
        <title>Complete sequence of Clostridium beijerinckii NCIMB 8052.</title>
        <authorList>
            <consortium name="US DOE Joint Genome Institute"/>
            <person name="Copeland A."/>
            <person name="Lucas S."/>
            <person name="Lapidus A."/>
            <person name="Barry K."/>
            <person name="Detter J.C."/>
            <person name="Glavina del Rio T."/>
            <person name="Hammon N."/>
            <person name="Israni S."/>
            <person name="Dalin E."/>
            <person name="Tice H."/>
            <person name="Pitluck S."/>
            <person name="Sims D."/>
            <person name="Brettin T."/>
            <person name="Bruce D."/>
            <person name="Tapia R."/>
            <person name="Brainard J."/>
            <person name="Schmutz J."/>
            <person name="Larimer F."/>
            <person name="Land M."/>
            <person name="Hauser L."/>
            <person name="Kyrpides N."/>
            <person name="Mikhailova N."/>
            <person name="Bennet G."/>
            <person name="Cann I."/>
            <person name="Chen J.-S."/>
            <person name="Contreras A.L."/>
            <person name="Jones D."/>
            <person name="Kashket E."/>
            <person name="Mitchell W."/>
            <person name="Stoddard S."/>
            <person name="Schwarz W."/>
            <person name="Qureshi N."/>
            <person name="Young M."/>
            <person name="Shi Z."/>
            <person name="Ezeji T."/>
            <person name="White B."/>
            <person name="Blaschek H."/>
            <person name="Richardson P."/>
        </authorList>
    </citation>
    <scope>NUCLEOTIDE SEQUENCE [LARGE SCALE GENOMIC DNA]</scope>
    <source>
        <strain>ATCC 51743 / NCIMB 8052</strain>
    </source>
</reference>
<accession>A6LX30</accession>
<keyword id="KW-0067">ATP-binding</keyword>
<keyword id="KW-0378">Hydrolase</keyword>
<keyword id="KW-0547">Nucleotide-binding</keyword>
<evidence type="ECO:0000255" key="1">
    <source>
        <dbReference type="HAMAP-Rule" id="MF_00691"/>
    </source>
</evidence>
<feature type="chain" id="PRO_1000083117" description="5-oxoprolinase subunit A">
    <location>
        <begin position="1"/>
        <end position="255"/>
    </location>
</feature>
<comment type="function">
    <text evidence="1">Catalyzes the cleavage of 5-oxoproline to form L-glutamate coupled to the hydrolysis of ATP to ADP and inorganic phosphate.</text>
</comment>
<comment type="catalytic activity">
    <reaction evidence="1">
        <text>5-oxo-L-proline + ATP + 2 H2O = L-glutamate + ADP + phosphate + H(+)</text>
        <dbReference type="Rhea" id="RHEA:10348"/>
        <dbReference type="ChEBI" id="CHEBI:15377"/>
        <dbReference type="ChEBI" id="CHEBI:15378"/>
        <dbReference type="ChEBI" id="CHEBI:29985"/>
        <dbReference type="ChEBI" id="CHEBI:30616"/>
        <dbReference type="ChEBI" id="CHEBI:43474"/>
        <dbReference type="ChEBI" id="CHEBI:58402"/>
        <dbReference type="ChEBI" id="CHEBI:456216"/>
        <dbReference type="EC" id="3.5.2.9"/>
    </reaction>
</comment>
<comment type="subunit">
    <text evidence="1">Forms a complex composed of PxpA, PxpB and PxpC.</text>
</comment>
<comment type="similarity">
    <text evidence="1">Belongs to the LamB/PxpA family.</text>
</comment>
<gene>
    <name evidence="1" type="primary">pxpA</name>
    <name type="ordered locus">Cbei_2759</name>
</gene>
<name>PXPA_CLOB8</name>
<organism>
    <name type="scientific">Clostridium beijerinckii (strain ATCC 51743 / NCIMB 8052)</name>
    <name type="common">Clostridium acetobutylicum</name>
    <dbReference type="NCBI Taxonomy" id="290402"/>
    <lineage>
        <taxon>Bacteria</taxon>
        <taxon>Bacillati</taxon>
        <taxon>Bacillota</taxon>
        <taxon>Clostridia</taxon>
        <taxon>Eubacteriales</taxon>
        <taxon>Clostridiaceae</taxon>
        <taxon>Clostridium</taxon>
    </lineage>
</organism>
<sequence>MYKVDLNCDLGESFGSYKLGLDEEVISYISSANIACGFHAADPLVMDYTVKLAKAAGVSVGAHPGFPDLVGFGRRNMNVSPKEAKAMVQYQIGALDSFCRAQGIKMQHVKPHGALYNMAGKDLKLAEAICEGIYEVNPELILLALSGSEMINAAQNIGLKVAREAFADRAYEEDGSLVARTKEGAMITDEEVAIKRVIKMIKENKVTSITGKDIPIKVDSICVHGDGAKALEFVKKIKLSLEEENIEIIPLHKIY</sequence>